<proteinExistence type="inferred from homology"/>
<feature type="chain" id="PRO_1000096488" description="Triosephosphate isomerase">
    <location>
        <begin position="1"/>
        <end position="248"/>
    </location>
</feature>
<feature type="active site" description="Electrophile" evidence="1">
    <location>
        <position position="94"/>
    </location>
</feature>
<feature type="active site" description="Proton acceptor" evidence="1">
    <location>
        <position position="166"/>
    </location>
</feature>
<feature type="binding site" evidence="1">
    <location>
        <begin position="9"/>
        <end position="11"/>
    </location>
    <ligand>
        <name>substrate</name>
    </ligand>
</feature>
<feature type="binding site" evidence="1">
    <location>
        <position position="172"/>
    </location>
    <ligand>
        <name>substrate</name>
    </ligand>
</feature>
<feature type="binding site" evidence="1">
    <location>
        <position position="212"/>
    </location>
    <ligand>
        <name>substrate</name>
    </ligand>
</feature>
<feature type="binding site" evidence="1">
    <location>
        <begin position="233"/>
        <end position="234"/>
    </location>
    <ligand>
        <name>substrate</name>
    </ligand>
</feature>
<accession>B1IDB7</accession>
<reference key="1">
    <citation type="journal article" date="2007" name="PLoS ONE">
        <title>Analysis of the neurotoxin complex genes in Clostridium botulinum A1-A4 and B1 strains: BoNT/A3, /Ba4 and /B1 clusters are located within plasmids.</title>
        <authorList>
            <person name="Smith T.J."/>
            <person name="Hill K.K."/>
            <person name="Foley B.T."/>
            <person name="Detter J.C."/>
            <person name="Munk A.C."/>
            <person name="Bruce D.C."/>
            <person name="Doggett N.A."/>
            <person name="Smith L.A."/>
            <person name="Marks J.D."/>
            <person name="Xie G."/>
            <person name="Brettin T.S."/>
        </authorList>
    </citation>
    <scope>NUCLEOTIDE SEQUENCE [LARGE SCALE GENOMIC DNA]</scope>
    <source>
        <strain>Okra / Type B1</strain>
    </source>
</reference>
<organism>
    <name type="scientific">Clostridium botulinum (strain Okra / Type B1)</name>
    <dbReference type="NCBI Taxonomy" id="498213"/>
    <lineage>
        <taxon>Bacteria</taxon>
        <taxon>Bacillati</taxon>
        <taxon>Bacillota</taxon>
        <taxon>Clostridia</taxon>
        <taxon>Eubacteriales</taxon>
        <taxon>Clostridiaceae</taxon>
        <taxon>Clostridium</taxon>
    </lineage>
</organism>
<comment type="function">
    <text evidence="1">Involved in the gluconeogenesis. Catalyzes stereospecifically the conversion of dihydroxyacetone phosphate (DHAP) to D-glyceraldehyde-3-phosphate (G3P).</text>
</comment>
<comment type="catalytic activity">
    <reaction evidence="1">
        <text>D-glyceraldehyde 3-phosphate = dihydroxyacetone phosphate</text>
        <dbReference type="Rhea" id="RHEA:18585"/>
        <dbReference type="ChEBI" id="CHEBI:57642"/>
        <dbReference type="ChEBI" id="CHEBI:59776"/>
        <dbReference type="EC" id="5.3.1.1"/>
    </reaction>
</comment>
<comment type="pathway">
    <text evidence="1">Carbohydrate biosynthesis; gluconeogenesis.</text>
</comment>
<comment type="pathway">
    <text evidence="1">Carbohydrate degradation; glycolysis; D-glyceraldehyde 3-phosphate from glycerone phosphate: step 1/1.</text>
</comment>
<comment type="subunit">
    <text evidence="1">Homodimer.</text>
</comment>
<comment type="subcellular location">
    <subcellularLocation>
        <location evidence="1">Cytoplasm</location>
    </subcellularLocation>
</comment>
<comment type="similarity">
    <text evidence="1">Belongs to the triosephosphate isomerase family.</text>
</comment>
<protein>
    <recommendedName>
        <fullName evidence="1">Triosephosphate isomerase</fullName>
        <shortName evidence="1">TIM</shortName>
        <shortName evidence="1">TPI</shortName>
        <ecNumber evidence="1">5.3.1.1</ecNumber>
    </recommendedName>
    <alternativeName>
        <fullName evidence="1">Triose-phosphate isomerase</fullName>
    </alternativeName>
</protein>
<keyword id="KW-0963">Cytoplasm</keyword>
<keyword id="KW-0312">Gluconeogenesis</keyword>
<keyword id="KW-0324">Glycolysis</keyword>
<keyword id="KW-0413">Isomerase</keyword>
<sequence length="248" mass="27306">MRTAIIAGNWKMNKTVKEAVELVKELKPLVKDAKCDVVVCPTYVCLPAVLEEVKGSNIKVGAQNMHFEESGAYTGEIAPKMLEELGVHYVIIGHSERRQYFNETDETVNKKVKKAFEHNLIPIVCCGESLEEREGNITEKVLEGQIKVGLKELSKEQVEKLVIAYEPIWAIGTGKTATDEQANETIGYIRTVVKDMYGESVADKVRIQYGGSVKPGTIKAQMAKEEIDGALVGGASLKAKDFAAIVNY</sequence>
<name>TPIS_CLOBK</name>
<gene>
    <name evidence="1" type="primary">tpiA</name>
    <name type="ordered locus">CLD_0547</name>
</gene>
<dbReference type="EC" id="5.3.1.1" evidence="1"/>
<dbReference type="EMBL" id="CP000939">
    <property type="protein sequence ID" value="ACA44402.1"/>
    <property type="molecule type" value="Genomic_DNA"/>
</dbReference>
<dbReference type="RefSeq" id="WP_003399036.1">
    <property type="nucleotide sequence ID" value="NC_010516.1"/>
</dbReference>
<dbReference type="SMR" id="B1IDB7"/>
<dbReference type="KEGG" id="cbb:CLD_0547"/>
<dbReference type="HOGENOM" id="CLU_024251_2_3_9"/>
<dbReference type="UniPathway" id="UPA00109">
    <property type="reaction ID" value="UER00189"/>
</dbReference>
<dbReference type="UniPathway" id="UPA00138"/>
<dbReference type="Proteomes" id="UP000008541">
    <property type="component" value="Chromosome"/>
</dbReference>
<dbReference type="GO" id="GO:0005829">
    <property type="term" value="C:cytosol"/>
    <property type="evidence" value="ECO:0007669"/>
    <property type="project" value="TreeGrafter"/>
</dbReference>
<dbReference type="GO" id="GO:0004807">
    <property type="term" value="F:triose-phosphate isomerase activity"/>
    <property type="evidence" value="ECO:0007669"/>
    <property type="project" value="UniProtKB-UniRule"/>
</dbReference>
<dbReference type="GO" id="GO:0006094">
    <property type="term" value="P:gluconeogenesis"/>
    <property type="evidence" value="ECO:0007669"/>
    <property type="project" value="UniProtKB-UniRule"/>
</dbReference>
<dbReference type="GO" id="GO:0046166">
    <property type="term" value="P:glyceraldehyde-3-phosphate biosynthetic process"/>
    <property type="evidence" value="ECO:0007669"/>
    <property type="project" value="TreeGrafter"/>
</dbReference>
<dbReference type="GO" id="GO:0019563">
    <property type="term" value="P:glycerol catabolic process"/>
    <property type="evidence" value="ECO:0007669"/>
    <property type="project" value="TreeGrafter"/>
</dbReference>
<dbReference type="GO" id="GO:0006096">
    <property type="term" value="P:glycolytic process"/>
    <property type="evidence" value="ECO:0007669"/>
    <property type="project" value="UniProtKB-UniRule"/>
</dbReference>
<dbReference type="CDD" id="cd00311">
    <property type="entry name" value="TIM"/>
    <property type="match status" value="1"/>
</dbReference>
<dbReference type="FunFam" id="3.20.20.70:FF:000016">
    <property type="entry name" value="Triosephosphate isomerase"/>
    <property type="match status" value="1"/>
</dbReference>
<dbReference type="Gene3D" id="3.20.20.70">
    <property type="entry name" value="Aldolase class I"/>
    <property type="match status" value="1"/>
</dbReference>
<dbReference type="HAMAP" id="MF_00147_B">
    <property type="entry name" value="TIM_B"/>
    <property type="match status" value="1"/>
</dbReference>
<dbReference type="InterPro" id="IPR013785">
    <property type="entry name" value="Aldolase_TIM"/>
</dbReference>
<dbReference type="InterPro" id="IPR035990">
    <property type="entry name" value="TIM_sf"/>
</dbReference>
<dbReference type="InterPro" id="IPR022896">
    <property type="entry name" value="TrioseP_Isoase_bac/euk"/>
</dbReference>
<dbReference type="InterPro" id="IPR000652">
    <property type="entry name" value="Triosephosphate_isomerase"/>
</dbReference>
<dbReference type="InterPro" id="IPR020861">
    <property type="entry name" value="Triosephosphate_isomerase_AS"/>
</dbReference>
<dbReference type="NCBIfam" id="TIGR00419">
    <property type="entry name" value="tim"/>
    <property type="match status" value="1"/>
</dbReference>
<dbReference type="PANTHER" id="PTHR21139">
    <property type="entry name" value="TRIOSEPHOSPHATE ISOMERASE"/>
    <property type="match status" value="1"/>
</dbReference>
<dbReference type="PANTHER" id="PTHR21139:SF42">
    <property type="entry name" value="TRIOSEPHOSPHATE ISOMERASE"/>
    <property type="match status" value="1"/>
</dbReference>
<dbReference type="Pfam" id="PF00121">
    <property type="entry name" value="TIM"/>
    <property type="match status" value="1"/>
</dbReference>
<dbReference type="SUPFAM" id="SSF51351">
    <property type="entry name" value="Triosephosphate isomerase (TIM)"/>
    <property type="match status" value="1"/>
</dbReference>
<dbReference type="PROSITE" id="PS00171">
    <property type="entry name" value="TIM_1"/>
    <property type="match status" value="1"/>
</dbReference>
<dbReference type="PROSITE" id="PS51440">
    <property type="entry name" value="TIM_2"/>
    <property type="match status" value="1"/>
</dbReference>
<evidence type="ECO:0000255" key="1">
    <source>
        <dbReference type="HAMAP-Rule" id="MF_00147"/>
    </source>
</evidence>